<protein>
    <recommendedName>
        <fullName evidence="4">Putative oxidoreductase YgfK</fullName>
    </recommendedName>
    <alternativeName>
        <fullName evidence="3">Putative oxidoreductase Fe-S subunit</fullName>
    </alternativeName>
</protein>
<gene>
    <name type="primary">ygfK</name>
    <name type="ordered locus">b2878</name>
    <name type="ordered locus">JW5923</name>
</gene>
<evidence type="ECO:0000255" key="1">
    <source>
        <dbReference type="PROSITE-ProRule" id="PRU00711"/>
    </source>
</evidence>
<evidence type="ECO:0000269" key="2">
    <source>
    </source>
</evidence>
<evidence type="ECO:0000303" key="3">
    <source>
    </source>
</evidence>
<evidence type="ECO:0000305" key="4"/>
<evidence type="ECO:0000305" key="5">
    <source>
    </source>
</evidence>
<accession>Q46811</accession>
<accession>Q2M9W2</accession>
<organism>
    <name type="scientific">Escherichia coli (strain K12)</name>
    <dbReference type="NCBI Taxonomy" id="83333"/>
    <lineage>
        <taxon>Bacteria</taxon>
        <taxon>Pseudomonadati</taxon>
        <taxon>Pseudomonadota</taxon>
        <taxon>Gammaproteobacteria</taxon>
        <taxon>Enterobacterales</taxon>
        <taxon>Enterobacteriaceae</taxon>
        <taxon>Escherichia</taxon>
    </lineage>
</organism>
<comment type="function">
    <text evidence="5">Could be an iron-sulfur flavoprotein with NADPH:O(2) oxidoreductase activity.</text>
</comment>
<comment type="cofactor">
    <cofactor evidence="1">
        <name>[4Fe-4S] cluster</name>
        <dbReference type="ChEBI" id="CHEBI:49883"/>
    </cofactor>
    <text evidence="1">Binds 1 [4Fe-4S] cluster.</text>
</comment>
<comment type="disruption phenotype">
    <text evidence="2">Insertion mutant is unable to reduce selenate to selenium.</text>
</comment>
<keyword id="KW-0004">4Fe-4S</keyword>
<keyword id="KW-0408">Iron</keyword>
<keyword id="KW-0411">Iron-sulfur</keyword>
<keyword id="KW-0479">Metal-binding</keyword>
<keyword id="KW-1185">Reference proteome</keyword>
<name>YGFK_ECOLI</name>
<feature type="chain" id="PRO_0000201329" description="Putative oxidoreductase YgfK">
    <location>
        <begin position="1"/>
        <end position="1032"/>
    </location>
</feature>
<feature type="domain" description="4Fe-4S ferredoxin-type" evidence="1">
    <location>
        <begin position="928"/>
        <end position="958"/>
    </location>
</feature>
<feature type="binding site" evidence="1">
    <location>
        <position position="938"/>
    </location>
    <ligand>
        <name>[4Fe-4S] cluster</name>
        <dbReference type="ChEBI" id="CHEBI:49883"/>
    </ligand>
</feature>
<feature type="binding site" evidence="1">
    <location>
        <position position="941"/>
    </location>
    <ligand>
        <name>[4Fe-4S] cluster</name>
        <dbReference type="ChEBI" id="CHEBI:49883"/>
    </ligand>
</feature>
<feature type="binding site" evidence="1">
    <location>
        <position position="944"/>
    </location>
    <ligand>
        <name>[4Fe-4S] cluster</name>
        <dbReference type="ChEBI" id="CHEBI:49883"/>
    </ligand>
</feature>
<feature type="binding site" evidence="1">
    <location>
        <position position="948"/>
    </location>
    <ligand>
        <name>[4Fe-4S] cluster</name>
        <dbReference type="ChEBI" id="CHEBI:49883"/>
    </ligand>
</feature>
<proteinExistence type="evidence at protein level"/>
<sequence length="1032" mass="115582">MGDIMRPIPFEELLTRIFDEYQQQRSIFGIPEQQFYSPVKGKTVSVFGETCATPVGPAAGPHTQLAQNIVTSWLTGGRFIELKTVQILDRLELEKPCIDAEDECFNTEWSTEFTLLKAWDEYLKAWFALHLLEAMFQPSDSGKSFIFNMSVGYNLEGIKQPPMQQFIDNMMDASDHPKFAQYRDTLNKLLQDDAFLARHGLQEKRESLQALPARIPTSMVHGVTLSTMHGCPPHEIEAICRYMLEEKGLNTFVKLNPTLLGYARVREILDVCGFGYIGLKEESFDHDLKLTQALEMLERLMALAKEKSLGFGVKLTNTLGTINNKGALPGEEMYMSGRALFPLSINVAAVLSRAFDGKLPISYSGGASQLTIRDIFDTGIRPITMATDLLKPGGYLRLSACMRELEGSDAWGLDHVDVERLNRLAADALTMEYTQKHWKPEERIEVAEDLPLTDCYVAPCVTACAIKQDIPEYIRLLGEHRYADALELIYQRNALPAITGHICDHQCQYNCTRLDYDSALNIRELKKVALEKGWDEYKQRWHKPAGSGSRHPVAVIGAGPAGLAAGYFLARAGHPVTLFEREANAGGVVKNIIPQFRIPAELIQHDIDFVAAHGVKFEYGCSPDLTIEQLKNQGFHYVLIATGTDKNSGVKLAGDNQNVWKSLPFLREYNKGTALKLGKHVVVVGAGNTAMDCARAALRVPGVEKATIVYRRSLQEMPAWREEYEEALHDGVEFRFLNNPERFDADGTLTLRVMSLGEPDEKGRRRPVETNETVTLLVDSLITAIGEQQDTEALNAMGVPLDKNGWPDVDHNGETRLTDVFMIGDVQRGPSSIVAAVGTARRATDAILSRENIRSHQNDKYWNNVNPAEIYQRKGDISITLVNSDDRDAFVAQEAARCLECNYVCSKCVDVCPNRANVSIAVPGFQNRFQTLHLDAYCNECGNCAQFCPWNGKPYKDKITVFSLAQDFDNSSNPGFLVEDCRVRVRLNNQSWVLNIDSKGQFNNVPPELNDMCRIISHVHQHHHYLLGRVEV</sequence>
<reference key="1">
    <citation type="journal article" date="1997" name="Science">
        <title>The complete genome sequence of Escherichia coli K-12.</title>
        <authorList>
            <person name="Blattner F.R."/>
            <person name="Plunkett G. III"/>
            <person name="Bloch C.A."/>
            <person name="Perna N.T."/>
            <person name="Burland V."/>
            <person name="Riley M."/>
            <person name="Collado-Vides J."/>
            <person name="Glasner J.D."/>
            <person name="Rode C.K."/>
            <person name="Mayhew G.F."/>
            <person name="Gregor J."/>
            <person name="Davis N.W."/>
            <person name="Kirkpatrick H.A."/>
            <person name="Goeden M.A."/>
            <person name="Rose D.J."/>
            <person name="Mau B."/>
            <person name="Shao Y."/>
        </authorList>
    </citation>
    <scope>NUCLEOTIDE SEQUENCE [LARGE SCALE GENOMIC DNA]</scope>
    <source>
        <strain>K12 / MG1655 / ATCC 47076</strain>
    </source>
</reference>
<reference key="2">
    <citation type="journal article" date="2006" name="Mol. Syst. Biol.">
        <title>Highly accurate genome sequences of Escherichia coli K-12 strains MG1655 and W3110.</title>
        <authorList>
            <person name="Hayashi K."/>
            <person name="Morooka N."/>
            <person name="Yamamoto Y."/>
            <person name="Fujita K."/>
            <person name="Isono K."/>
            <person name="Choi S."/>
            <person name="Ohtsubo E."/>
            <person name="Baba T."/>
            <person name="Wanner B.L."/>
            <person name="Mori H."/>
            <person name="Horiuchi T."/>
        </authorList>
    </citation>
    <scope>NUCLEOTIDE SEQUENCE [LARGE SCALE GENOMIC DNA]</scope>
    <source>
        <strain>K12 / W3110 / ATCC 27325 / DSM 5911</strain>
    </source>
</reference>
<reference key="3">
    <citation type="journal article" date="2002" name="Microbiology">
        <title>Involvement of a putative molybdenum enzyme in the reduction of selenate by Escherichia coli.</title>
        <authorList>
            <person name="Bebien M."/>
            <person name="Kirsch J."/>
            <person name="Mejean V."/>
            <person name="Vermeglio A."/>
        </authorList>
    </citation>
    <scope>DISRUPTION PHENOTYPE</scope>
    <source>
        <strain>K12</strain>
    </source>
</reference>
<reference key="4">
    <citation type="journal article" date="2011" name="Metallomics">
        <title>Exploring the microbial metalloproteome using MIRAGE.</title>
        <authorList>
            <person name="Sevcenco A.M."/>
            <person name="Pinkse M.W."/>
            <person name="Wolterbeek H.T."/>
            <person name="Verhaert P.D."/>
            <person name="Hagen W.R."/>
            <person name="Hagedoorn P.L."/>
        </authorList>
    </citation>
    <scope>IDENTIFICATION BY MASS SPECTROMETRY</scope>
    <scope>IRON-BINDING</scope>
    <scope>PRELIMINARY FUNCTION</scope>
</reference>
<dbReference type="EMBL" id="U28375">
    <property type="protein sequence ID" value="AAA83059.1"/>
    <property type="molecule type" value="Genomic_DNA"/>
</dbReference>
<dbReference type="EMBL" id="U00096">
    <property type="protein sequence ID" value="AAC75916.1"/>
    <property type="molecule type" value="Genomic_DNA"/>
</dbReference>
<dbReference type="EMBL" id="AP009048">
    <property type="protein sequence ID" value="BAE76944.1"/>
    <property type="molecule type" value="Genomic_DNA"/>
</dbReference>
<dbReference type="PIR" id="F65071">
    <property type="entry name" value="F65071"/>
</dbReference>
<dbReference type="RefSeq" id="NP_417354.1">
    <property type="nucleotide sequence ID" value="NC_000913.3"/>
</dbReference>
<dbReference type="RefSeq" id="WP_000502395.1">
    <property type="nucleotide sequence ID" value="NZ_LN832404.1"/>
</dbReference>
<dbReference type="SMR" id="Q46811"/>
<dbReference type="BioGRID" id="4262325">
    <property type="interactions" value="31"/>
</dbReference>
<dbReference type="BioGRID" id="853310">
    <property type="interactions" value="1"/>
</dbReference>
<dbReference type="DIP" id="DIP-28091N"/>
<dbReference type="FunCoup" id="Q46811">
    <property type="interactions" value="165"/>
</dbReference>
<dbReference type="IntAct" id="Q46811">
    <property type="interactions" value="2"/>
</dbReference>
<dbReference type="STRING" id="511145.b2878"/>
<dbReference type="jPOST" id="Q46811"/>
<dbReference type="PaxDb" id="511145-b2878"/>
<dbReference type="EnsemblBacteria" id="AAC75916">
    <property type="protein sequence ID" value="AAC75916"/>
    <property type="gene ID" value="b2878"/>
</dbReference>
<dbReference type="GeneID" id="949068"/>
<dbReference type="KEGG" id="ecj:JW5923"/>
<dbReference type="KEGG" id="eco:b2878"/>
<dbReference type="KEGG" id="ecoc:C3026_15785"/>
<dbReference type="PATRIC" id="fig|1411691.4.peg.3856"/>
<dbReference type="EchoBASE" id="EB2873"/>
<dbReference type="eggNOG" id="COG0493">
    <property type="taxonomic scope" value="Bacteria"/>
</dbReference>
<dbReference type="eggNOG" id="COG1145">
    <property type="taxonomic scope" value="Bacteria"/>
</dbReference>
<dbReference type="HOGENOM" id="CLU_014791_0_0_6"/>
<dbReference type="InParanoid" id="Q46811"/>
<dbReference type="OMA" id="NECGNCE"/>
<dbReference type="OrthoDB" id="9810782at2"/>
<dbReference type="BioCyc" id="EcoCyc:G7497-MONOMER"/>
<dbReference type="PRO" id="PR:Q46811"/>
<dbReference type="Proteomes" id="UP000000625">
    <property type="component" value="Chromosome"/>
</dbReference>
<dbReference type="GO" id="GO:0051539">
    <property type="term" value="F:4 iron, 4 sulfur cluster binding"/>
    <property type="evidence" value="ECO:0007669"/>
    <property type="project" value="UniProtKB-KW"/>
</dbReference>
<dbReference type="GO" id="GO:0005506">
    <property type="term" value="F:iron ion binding"/>
    <property type="evidence" value="ECO:0000314"/>
    <property type="project" value="EcoCyc"/>
</dbReference>
<dbReference type="GO" id="GO:0016491">
    <property type="term" value="F:oxidoreductase activity"/>
    <property type="evidence" value="ECO:0000318"/>
    <property type="project" value="GO_Central"/>
</dbReference>
<dbReference type="Gene3D" id="1.10.1060.10">
    <property type="entry name" value="Alpha-helical ferredoxin"/>
    <property type="match status" value="1"/>
</dbReference>
<dbReference type="Gene3D" id="3.50.50.60">
    <property type="entry name" value="FAD/NAD(P)-binding domain"/>
    <property type="match status" value="2"/>
</dbReference>
<dbReference type="InterPro" id="IPR017896">
    <property type="entry name" value="4Fe4S_Fe-S-bd"/>
</dbReference>
<dbReference type="InterPro" id="IPR017900">
    <property type="entry name" value="4Fe4S_Fe_S_CS"/>
</dbReference>
<dbReference type="InterPro" id="IPR028261">
    <property type="entry name" value="DPD_II"/>
</dbReference>
<dbReference type="InterPro" id="IPR036188">
    <property type="entry name" value="FAD/NAD-bd_sf"/>
</dbReference>
<dbReference type="InterPro" id="IPR023753">
    <property type="entry name" value="FAD/NAD-binding_dom"/>
</dbReference>
<dbReference type="InterPro" id="IPR009051">
    <property type="entry name" value="Helical_ferredxn"/>
</dbReference>
<dbReference type="InterPro" id="IPR017701">
    <property type="entry name" value="Se_rdtase_YgfK"/>
</dbReference>
<dbReference type="NCBIfam" id="TIGR03315">
    <property type="entry name" value="Se_ygfK"/>
    <property type="match status" value="1"/>
</dbReference>
<dbReference type="PANTHER" id="PTHR42783">
    <property type="entry name" value="GLUTAMATE SYNTHASE [NADPH] SMALL CHAIN"/>
    <property type="match status" value="1"/>
</dbReference>
<dbReference type="PANTHER" id="PTHR42783:SF3">
    <property type="entry name" value="GLUTAMATE SYNTHASE [NADPH] SMALL CHAIN-RELATED"/>
    <property type="match status" value="1"/>
</dbReference>
<dbReference type="Pfam" id="PF14691">
    <property type="entry name" value="Fer4_20"/>
    <property type="match status" value="1"/>
</dbReference>
<dbReference type="Pfam" id="PF07992">
    <property type="entry name" value="Pyr_redox_2"/>
    <property type="match status" value="1"/>
</dbReference>
<dbReference type="PRINTS" id="PR00419">
    <property type="entry name" value="ADXRDTASE"/>
</dbReference>
<dbReference type="SUPFAM" id="SSF46548">
    <property type="entry name" value="alpha-helical ferredoxin"/>
    <property type="match status" value="2"/>
</dbReference>
<dbReference type="SUPFAM" id="SSF51395">
    <property type="entry name" value="FMN-linked oxidoreductases"/>
    <property type="match status" value="1"/>
</dbReference>
<dbReference type="SUPFAM" id="SSF51971">
    <property type="entry name" value="Nucleotide-binding domain"/>
    <property type="match status" value="1"/>
</dbReference>
<dbReference type="PROSITE" id="PS00198">
    <property type="entry name" value="4FE4S_FER_1"/>
    <property type="match status" value="1"/>
</dbReference>
<dbReference type="PROSITE" id="PS51379">
    <property type="entry name" value="4FE4S_FER_2"/>
    <property type="match status" value="1"/>
</dbReference>